<feature type="chain" id="PRO_0000357884" description="NADH-quinone oxidoreductase subunit D">
    <location>
        <begin position="1"/>
        <end position="391"/>
    </location>
</feature>
<proteinExistence type="inferred from homology"/>
<comment type="function">
    <text evidence="1">NDH-1 shuttles electrons from NADH, via FMN and iron-sulfur (Fe-S) centers, to quinones in the respiratory chain. The immediate electron acceptor for the enzyme in this species is believed to be ubiquinone. Couples the redox reaction to proton translocation (for every two electrons transferred, four hydrogen ions are translocated across the cytoplasmic membrane), and thus conserves the redox energy in a proton gradient.</text>
</comment>
<comment type="catalytic activity">
    <reaction evidence="1">
        <text>a quinone + NADH + 5 H(+)(in) = a quinol + NAD(+) + 4 H(+)(out)</text>
        <dbReference type="Rhea" id="RHEA:57888"/>
        <dbReference type="ChEBI" id="CHEBI:15378"/>
        <dbReference type="ChEBI" id="CHEBI:24646"/>
        <dbReference type="ChEBI" id="CHEBI:57540"/>
        <dbReference type="ChEBI" id="CHEBI:57945"/>
        <dbReference type="ChEBI" id="CHEBI:132124"/>
    </reaction>
</comment>
<comment type="subunit">
    <text evidence="1">NDH-1 is composed of 14 different subunits. Subunits NuoB, C, D, E, F, and G constitute the peripheral sector of the complex.</text>
</comment>
<comment type="subcellular location">
    <subcellularLocation>
        <location evidence="1">Cell inner membrane</location>
        <topology evidence="1">Peripheral membrane protein</topology>
        <orientation evidence="1">Cytoplasmic side</orientation>
    </subcellularLocation>
</comment>
<comment type="similarity">
    <text evidence="1">Belongs to the complex I 49 kDa subunit family.</text>
</comment>
<sequence length="391" mass="44224">MTKKIKTLNLNFGPQHPAAHGVLRLILELDGEVVEKADPHIGLLHRGTEKLIENKTYMQAVPYFDRLDYVAPMNQEHAFALAIEKILKINVPIRAQLIRVMFCEIGRILSHILNVTTQALDVGALTPSLWGFEERETLMTFYERASGSRLHANYFRAGGVHQDLPMGLAEDIGNFCESFPKIIDDLETLLTDNRIFKQRNVDIGIVTKEDALDYSFSGVMIRGSGVPWDLRKSQPYDCYEQLEFKIPVGKNGDCFDRYLCRIEEMRESVSIIKQCLSKMEKGPIKSLDGKISPPPKKDIKQSMEALIHHFKLFTEGYRVDKDEIYTAVEAPKGEFGVYLISDGTSKPYKCKIRAPGFSHLQAMDYLIKGHMLADVPAVLGSLDIVFGEVDR</sequence>
<name>NUOD_PELUB</name>
<gene>
    <name evidence="1" type="primary">nuoD</name>
    <name type="ordered locus">SAR11_0886</name>
</gene>
<accession>Q4FM88</accession>
<protein>
    <recommendedName>
        <fullName evidence="1">NADH-quinone oxidoreductase subunit D</fullName>
        <ecNumber evidence="1">7.1.1.-</ecNumber>
    </recommendedName>
    <alternativeName>
        <fullName evidence="1">NADH dehydrogenase I subunit D</fullName>
    </alternativeName>
    <alternativeName>
        <fullName evidence="1">NDH-1 subunit D</fullName>
    </alternativeName>
</protein>
<organism>
    <name type="scientific">Pelagibacter ubique (strain HTCC1062)</name>
    <dbReference type="NCBI Taxonomy" id="335992"/>
    <lineage>
        <taxon>Bacteria</taxon>
        <taxon>Pseudomonadati</taxon>
        <taxon>Pseudomonadota</taxon>
        <taxon>Alphaproteobacteria</taxon>
        <taxon>Candidatus Pelagibacterales</taxon>
        <taxon>Candidatus Pelagibacteraceae</taxon>
        <taxon>Candidatus Pelagibacter</taxon>
    </lineage>
</organism>
<keyword id="KW-0997">Cell inner membrane</keyword>
<keyword id="KW-1003">Cell membrane</keyword>
<keyword id="KW-0472">Membrane</keyword>
<keyword id="KW-0520">NAD</keyword>
<keyword id="KW-0874">Quinone</keyword>
<keyword id="KW-1185">Reference proteome</keyword>
<keyword id="KW-1278">Translocase</keyword>
<keyword id="KW-0813">Transport</keyword>
<keyword id="KW-0830">Ubiquinone</keyword>
<reference key="1">
    <citation type="journal article" date="2005" name="Science">
        <title>Genome streamlining in a cosmopolitan oceanic bacterium.</title>
        <authorList>
            <person name="Giovannoni S.J."/>
            <person name="Tripp H.J."/>
            <person name="Givan S."/>
            <person name="Podar M."/>
            <person name="Vergin K.L."/>
            <person name="Baptista D."/>
            <person name="Bibbs L."/>
            <person name="Eads J."/>
            <person name="Richardson T.H."/>
            <person name="Noordewier M."/>
            <person name="Rappe M.S."/>
            <person name="Short J.M."/>
            <person name="Carrington J.C."/>
            <person name="Mathur E.J."/>
        </authorList>
    </citation>
    <scope>NUCLEOTIDE SEQUENCE [LARGE SCALE GENOMIC DNA]</scope>
    <source>
        <strain>HTCC1062</strain>
    </source>
</reference>
<dbReference type="EC" id="7.1.1.-" evidence="1"/>
<dbReference type="EMBL" id="CP000084">
    <property type="protein sequence ID" value="AAZ21701.1"/>
    <property type="molecule type" value="Genomic_DNA"/>
</dbReference>
<dbReference type="RefSeq" id="WP_011282013.1">
    <property type="nucleotide sequence ID" value="NC_007205.1"/>
</dbReference>
<dbReference type="SMR" id="Q4FM88"/>
<dbReference type="STRING" id="335992.SAR11_0886"/>
<dbReference type="GeneID" id="66295381"/>
<dbReference type="KEGG" id="pub:SAR11_0886"/>
<dbReference type="eggNOG" id="COG0649">
    <property type="taxonomic scope" value="Bacteria"/>
</dbReference>
<dbReference type="HOGENOM" id="CLU_015134_1_1_5"/>
<dbReference type="OrthoDB" id="9801496at2"/>
<dbReference type="Proteomes" id="UP000002528">
    <property type="component" value="Chromosome"/>
</dbReference>
<dbReference type="GO" id="GO:0005886">
    <property type="term" value="C:plasma membrane"/>
    <property type="evidence" value="ECO:0007669"/>
    <property type="project" value="UniProtKB-SubCell"/>
</dbReference>
<dbReference type="GO" id="GO:0051287">
    <property type="term" value="F:NAD binding"/>
    <property type="evidence" value="ECO:0007669"/>
    <property type="project" value="InterPro"/>
</dbReference>
<dbReference type="GO" id="GO:0050136">
    <property type="term" value="F:NADH:ubiquinone reductase (non-electrogenic) activity"/>
    <property type="evidence" value="ECO:0007669"/>
    <property type="project" value="UniProtKB-UniRule"/>
</dbReference>
<dbReference type="GO" id="GO:0048038">
    <property type="term" value="F:quinone binding"/>
    <property type="evidence" value="ECO:0007669"/>
    <property type="project" value="UniProtKB-KW"/>
</dbReference>
<dbReference type="FunFam" id="1.10.645.10:FF:000005">
    <property type="entry name" value="NADH-quinone oxidoreductase subunit D"/>
    <property type="match status" value="1"/>
</dbReference>
<dbReference type="Gene3D" id="1.10.645.10">
    <property type="entry name" value="Cytochrome-c3 Hydrogenase, chain B"/>
    <property type="match status" value="1"/>
</dbReference>
<dbReference type="HAMAP" id="MF_01358">
    <property type="entry name" value="NDH1_NuoD"/>
    <property type="match status" value="1"/>
</dbReference>
<dbReference type="InterPro" id="IPR001135">
    <property type="entry name" value="NADH_Q_OxRdtase_suD"/>
</dbReference>
<dbReference type="InterPro" id="IPR014029">
    <property type="entry name" value="NADH_UbQ_OxRdtase_49kDa_CS"/>
</dbReference>
<dbReference type="InterPro" id="IPR022885">
    <property type="entry name" value="NDH1_su_D/H"/>
</dbReference>
<dbReference type="InterPro" id="IPR029014">
    <property type="entry name" value="NiFe-Hase_large"/>
</dbReference>
<dbReference type="NCBIfam" id="TIGR01962">
    <property type="entry name" value="NuoD"/>
    <property type="match status" value="1"/>
</dbReference>
<dbReference type="NCBIfam" id="NF004739">
    <property type="entry name" value="PRK06075.1"/>
    <property type="match status" value="1"/>
</dbReference>
<dbReference type="PANTHER" id="PTHR11993:SF10">
    <property type="entry name" value="NADH DEHYDROGENASE [UBIQUINONE] IRON-SULFUR PROTEIN 2, MITOCHONDRIAL"/>
    <property type="match status" value="1"/>
</dbReference>
<dbReference type="PANTHER" id="PTHR11993">
    <property type="entry name" value="NADH-UBIQUINONE OXIDOREDUCTASE 49 KDA SUBUNIT"/>
    <property type="match status" value="1"/>
</dbReference>
<dbReference type="Pfam" id="PF00346">
    <property type="entry name" value="Complex1_49kDa"/>
    <property type="match status" value="1"/>
</dbReference>
<dbReference type="SUPFAM" id="SSF56762">
    <property type="entry name" value="HydB/Nqo4-like"/>
    <property type="match status" value="1"/>
</dbReference>
<dbReference type="PROSITE" id="PS00535">
    <property type="entry name" value="COMPLEX1_49K"/>
    <property type="match status" value="1"/>
</dbReference>
<evidence type="ECO:0000255" key="1">
    <source>
        <dbReference type="HAMAP-Rule" id="MF_01358"/>
    </source>
</evidence>